<proteinExistence type="evidence at protein level"/>
<protein>
    <recommendedName>
        <fullName>O-GlcNAcase NagJ</fullName>
        <ecNumber evidence="4 6 7">3.2.1.169</ecNumber>
    </recommendedName>
    <alternativeName>
        <fullName>Beta-N-acetylglucosaminidase</fullName>
    </alternativeName>
    <alternativeName>
        <fullName>Beta-N-acetylhexosaminidase</fullName>
    </alternativeName>
    <alternativeName>
        <fullName>Beta-hexosaminidase</fullName>
    </alternativeName>
    <alternativeName>
        <fullName evidence="8">GH84C</fullName>
    </alternativeName>
    <alternativeName>
        <fullName>Hexosaminidase B</fullName>
    </alternativeName>
    <alternativeName>
        <fullName>N-acetyl-beta-D-glucosaminidase</fullName>
    </alternativeName>
</protein>
<comment type="function">
    <text evidence="4 5 6">Binds carbohydrates (PubMed:16990278). Capable of hydrolyzing the glycosidic link of O-GlcNAcylated proteins. Can bind and deglycosylate O-glycosylated peptides from mammals.</text>
</comment>
<comment type="catalytic activity">
    <reaction evidence="4 6 7">
        <text>3-O-(N-acetyl-beta-D-glucosaminyl)-L-seryl-[protein] + H2O = N-acetyl-D-glucosamine + L-seryl-[protein]</text>
        <dbReference type="Rhea" id="RHEA:48876"/>
        <dbReference type="Rhea" id="RHEA-COMP:9863"/>
        <dbReference type="Rhea" id="RHEA-COMP:12251"/>
        <dbReference type="ChEBI" id="CHEBI:15377"/>
        <dbReference type="ChEBI" id="CHEBI:29999"/>
        <dbReference type="ChEBI" id="CHEBI:90838"/>
        <dbReference type="ChEBI" id="CHEBI:506227"/>
        <dbReference type="EC" id="3.2.1.169"/>
    </reaction>
</comment>
<comment type="catalytic activity">
    <reaction evidence="4 6 7">
        <text>3-O-(N-acetyl-beta-D-glucosaminyl)-L-threonyl-[protein] + H2O = L-threonyl-[protein] + N-acetyl-D-glucosamine</text>
        <dbReference type="Rhea" id="RHEA:48892"/>
        <dbReference type="Rhea" id="RHEA-COMP:11060"/>
        <dbReference type="Rhea" id="RHEA-COMP:12252"/>
        <dbReference type="ChEBI" id="CHEBI:15377"/>
        <dbReference type="ChEBI" id="CHEBI:30013"/>
        <dbReference type="ChEBI" id="CHEBI:90840"/>
        <dbReference type="ChEBI" id="CHEBI:506227"/>
        <dbReference type="EC" id="3.2.1.169"/>
    </reaction>
</comment>
<comment type="activity regulation">
    <text evidence="4 6">Inhibited by O-(2-acetamido-2-deoxy-D-glucopyranosylidene)amino-N-phenyl-carbamate (PUGNAc) and streptozotocin.</text>
</comment>
<comment type="biophysicochemical properties">
    <kinetics>
        <KM evidence="4">2.9 uM for 4-methylumbelliferyl-N-acetyl-beta-D-glucosaminide (4MU-NAG)</KM>
    </kinetics>
</comment>
<comment type="miscellaneous">
    <text evidence="9">Metal-binding observed in X-ray crystal structures is artifactual.</text>
</comment>
<comment type="similarity">
    <text evidence="3">Belongs to the glycosyl hydrolase 84 family.</text>
</comment>
<feature type="signal peptide" evidence="1">
    <location>
        <begin position="1"/>
        <end position="30"/>
    </location>
</feature>
<feature type="chain" id="PRO_0000257985" description="O-GlcNAcase NagJ">
    <location>
        <begin position="31"/>
        <end position="1001"/>
    </location>
</feature>
<feature type="domain" description="GH84" evidence="3">
    <location>
        <begin position="180"/>
        <end position="452"/>
    </location>
</feature>
<feature type="domain" description="Fibronectin type-III" evidence="2">
    <location>
        <begin position="916"/>
        <end position="1001"/>
    </location>
</feature>
<feature type="region of interest" description="Catalytic domain" evidence="1">
    <location>
        <begin position="179"/>
        <end position="469"/>
    </location>
</feature>
<feature type="coiled-coil region" evidence="1">
    <location>
        <begin position="515"/>
        <end position="543"/>
    </location>
</feature>
<feature type="coiled-coil region" evidence="1">
    <location>
        <begin position="573"/>
        <end position="597"/>
    </location>
</feature>
<feature type="active site" description="Proton donor" evidence="3 4">
    <location>
        <position position="298"/>
    </location>
</feature>
<feature type="binding site" evidence="4">
    <location>
        <position position="187"/>
    </location>
    <ligand>
        <name>a protein</name>
        <dbReference type="ChEBI" id="CHEBI:16541"/>
    </ligand>
</feature>
<feature type="binding site" evidence="4">
    <location>
        <position position="218"/>
    </location>
    <ligand>
        <name>a protein</name>
        <dbReference type="ChEBI" id="CHEBI:16541"/>
    </ligand>
</feature>
<feature type="binding site" evidence="4">
    <location>
        <position position="297"/>
    </location>
    <ligand>
        <name>a protein</name>
        <dbReference type="ChEBI" id="CHEBI:16541"/>
    </ligand>
</feature>
<feature type="binding site" evidence="4">
    <location>
        <position position="335"/>
    </location>
    <ligand>
        <name>a protein</name>
        <dbReference type="ChEBI" id="CHEBI:16541"/>
    </ligand>
</feature>
<feature type="binding site" evidence="4">
    <location>
        <begin position="394"/>
        <end position="396"/>
    </location>
    <ligand>
        <name>a protein</name>
        <dbReference type="ChEBI" id="CHEBI:16541"/>
    </ligand>
</feature>
<feature type="binding site" evidence="4">
    <location>
        <position position="401"/>
    </location>
    <ligand>
        <name>a protein</name>
        <dbReference type="ChEBI" id="CHEBI:16541"/>
    </ligand>
</feature>
<feature type="binding site" evidence="4">
    <location>
        <position position="429"/>
    </location>
    <ligand>
        <name>a protein</name>
        <dbReference type="ChEBI" id="CHEBI:16541"/>
    </ligand>
</feature>
<feature type="mutagenesis site" description="99% decrease in activity for 4MU-NAG." evidence="4">
    <original>D</original>
    <variation>A</variation>
    <location>
        <position position="297"/>
    </location>
</feature>
<feature type="mutagenesis site" description="99% decrease in activity for 4MU-NAG." evidence="4 7">
    <original>D</original>
    <variation>N</variation>
    <location>
        <position position="298"/>
    </location>
</feature>
<feature type="mutagenesis site" description="Strongly decreases affinity for 4MU-NAG. 99% decrease in activity for 4MU-NAG." evidence="4">
    <original>Y</original>
    <variation>F</variation>
    <location>
        <position position="335"/>
    </location>
</feature>
<feature type="mutagenesis site" description="No change in activity for 4MU-NAG." evidence="4">
    <original>N</original>
    <variation>A</variation>
    <location>
        <position position="390"/>
    </location>
</feature>
<feature type="mutagenesis site" description="Strongly decreases affinity for 4MU-NAG. 99% decrease in activity for 4MU-NAG." evidence="4">
    <original>N</original>
    <variation>A</variation>
    <location>
        <position position="396"/>
    </location>
</feature>
<feature type="mutagenesis site" description="Strongly decreases affinity for 4MU-NAG. 99% decrease in activity for 4MU-NAG." evidence="4">
    <original>D</original>
    <variation>A</variation>
    <location>
        <position position="401"/>
    </location>
</feature>
<feature type="mutagenesis site" description="Strongly decreases affinity for 4MU-NAG. 97% decrease in activity for 4MU-NAG." evidence="4">
    <original>W</original>
    <variation>A</variation>
    <location>
        <position position="490"/>
    </location>
</feature>
<feature type="strand" evidence="15">
    <location>
        <begin position="51"/>
        <end position="55"/>
    </location>
</feature>
<feature type="strand" evidence="15">
    <location>
        <begin position="64"/>
        <end position="70"/>
    </location>
</feature>
<feature type="turn" evidence="15">
    <location>
        <begin position="71"/>
        <end position="73"/>
    </location>
</feature>
<feature type="helix" evidence="15">
    <location>
        <begin position="76"/>
        <end position="88"/>
    </location>
</feature>
<feature type="strand" evidence="17">
    <location>
        <begin position="95"/>
        <end position="97"/>
    </location>
</feature>
<feature type="strand" evidence="15">
    <location>
        <begin position="101"/>
        <end position="108"/>
    </location>
</feature>
<feature type="strand" evidence="19">
    <location>
        <begin position="109"/>
        <end position="111"/>
    </location>
</feature>
<feature type="helix" evidence="15">
    <location>
        <begin position="114"/>
        <end position="120"/>
    </location>
</feature>
<feature type="strand" evidence="15">
    <location>
        <begin position="133"/>
        <end position="138"/>
    </location>
</feature>
<feature type="strand" evidence="15">
    <location>
        <begin position="141"/>
        <end position="148"/>
    </location>
</feature>
<feature type="helix" evidence="15">
    <location>
        <begin position="149"/>
        <end position="162"/>
    </location>
</feature>
<feature type="strand" evidence="16">
    <location>
        <begin position="164"/>
        <end position="168"/>
    </location>
</feature>
<feature type="strand" evidence="15">
    <location>
        <begin position="171"/>
        <end position="175"/>
    </location>
</feature>
<feature type="strand" evidence="15">
    <location>
        <begin position="178"/>
        <end position="185"/>
    </location>
</feature>
<feature type="strand" evidence="12">
    <location>
        <begin position="189"/>
        <end position="191"/>
    </location>
</feature>
<feature type="helix" evidence="15">
    <location>
        <begin position="195"/>
        <end position="207"/>
    </location>
</feature>
<feature type="strand" evidence="15">
    <location>
        <begin position="212"/>
        <end position="215"/>
    </location>
</feature>
<feature type="helix" evidence="15">
    <location>
        <begin position="221"/>
        <end position="223"/>
    </location>
</feature>
<feature type="turn" evidence="15">
    <location>
        <begin position="224"/>
        <end position="228"/>
    </location>
</feature>
<feature type="helix" evidence="15">
    <location>
        <begin position="233"/>
        <end position="235"/>
    </location>
</feature>
<feature type="helix" evidence="15">
    <location>
        <begin position="236"/>
        <end position="248"/>
    </location>
</feature>
<feature type="strand" evidence="15">
    <location>
        <begin position="252"/>
        <end position="257"/>
    </location>
</feature>
<feature type="helix" evidence="15">
    <location>
        <begin position="259"/>
        <end position="261"/>
    </location>
</feature>
<feature type="helix" evidence="15">
    <location>
        <begin position="268"/>
        <end position="285"/>
    </location>
</feature>
<feature type="turn" evidence="15">
    <location>
        <begin position="286"/>
        <end position="288"/>
    </location>
</feature>
<feature type="strand" evidence="15">
    <location>
        <begin position="291"/>
        <end position="295"/>
    </location>
</feature>
<feature type="helix" evidence="15">
    <location>
        <begin position="304"/>
        <end position="317"/>
    </location>
</feature>
<feature type="helix" evidence="15">
    <location>
        <begin position="319"/>
        <end position="322"/>
    </location>
</feature>
<feature type="strand" evidence="20">
    <location>
        <begin position="323"/>
        <end position="325"/>
    </location>
</feature>
<feature type="strand" evidence="15">
    <location>
        <begin position="329"/>
        <end position="331"/>
    </location>
</feature>
<feature type="helix" evidence="15">
    <location>
        <begin position="337"/>
        <end position="340"/>
    </location>
</feature>
<feature type="strand" evidence="16">
    <location>
        <begin position="341"/>
        <end position="346"/>
    </location>
</feature>
<feature type="helix" evidence="15">
    <location>
        <begin position="348"/>
        <end position="356"/>
    </location>
</feature>
<feature type="strand" evidence="15">
    <location>
        <begin position="361"/>
        <end position="365"/>
    </location>
</feature>
<feature type="strand" evidence="15">
    <location>
        <begin position="367"/>
        <end position="371"/>
    </location>
</feature>
<feature type="helix" evidence="15">
    <location>
        <begin position="377"/>
        <end position="387"/>
    </location>
</feature>
<feature type="strand" evidence="15">
    <location>
        <begin position="391"/>
        <end position="395"/>
    </location>
</feature>
<feature type="helix" evidence="15">
    <location>
        <begin position="419"/>
        <end position="421"/>
    </location>
</feature>
<feature type="strand" evidence="15">
    <location>
        <begin position="423"/>
        <end position="428"/>
    </location>
</feature>
<feature type="helix" evidence="15">
    <location>
        <begin position="434"/>
        <end position="449"/>
    </location>
</feature>
<feature type="helix" evidence="15">
    <location>
        <begin position="451"/>
        <end position="453"/>
    </location>
</feature>
<feature type="helix" evidence="15">
    <location>
        <begin position="456"/>
        <end position="468"/>
    </location>
</feature>
<feature type="helix" evidence="15">
    <location>
        <begin position="469"/>
        <end position="471"/>
    </location>
</feature>
<feature type="helix" evidence="15">
    <location>
        <begin position="472"/>
        <end position="479"/>
    </location>
</feature>
<feature type="strand" evidence="15">
    <location>
        <begin position="488"/>
        <end position="490"/>
    </location>
</feature>
<feature type="strand" evidence="15">
    <location>
        <begin position="492"/>
        <end position="495"/>
    </location>
</feature>
<feature type="helix" evidence="15">
    <location>
        <begin position="499"/>
        <end position="512"/>
    </location>
</feature>
<feature type="turn" evidence="15">
    <location>
        <begin position="513"/>
        <end position="515"/>
    </location>
</feature>
<feature type="helix" evidence="15">
    <location>
        <begin position="519"/>
        <end position="542"/>
    </location>
</feature>
<feature type="helix" evidence="15">
    <location>
        <begin position="545"/>
        <end position="576"/>
    </location>
</feature>
<feature type="helix" evidence="15">
    <location>
        <begin position="580"/>
        <end position="599"/>
    </location>
</feature>
<feature type="turn" evidence="15">
    <location>
        <begin position="606"/>
        <end position="608"/>
    </location>
</feature>
<feature type="helix" evidence="15">
    <location>
        <begin position="609"/>
        <end position="618"/>
    </location>
</feature>
<feature type="helix" evidence="15">
    <location>
        <begin position="621"/>
        <end position="623"/>
    </location>
</feature>
<feature type="strand" evidence="11">
    <location>
        <begin position="628"/>
        <end position="634"/>
    </location>
</feature>
<feature type="strand" evidence="11">
    <location>
        <begin position="639"/>
        <end position="641"/>
    </location>
</feature>
<feature type="helix" evidence="11">
    <location>
        <begin position="645"/>
        <end position="648"/>
    </location>
</feature>
<feature type="strand" evidence="11">
    <location>
        <begin position="649"/>
        <end position="651"/>
    </location>
</feature>
<feature type="strand" evidence="11">
    <location>
        <begin position="662"/>
        <end position="664"/>
    </location>
</feature>
<feature type="strand" evidence="11">
    <location>
        <begin position="671"/>
        <end position="688"/>
    </location>
</feature>
<feature type="strand" evidence="11">
    <location>
        <begin position="697"/>
        <end position="719"/>
    </location>
</feature>
<feature type="strand" evidence="11">
    <location>
        <begin position="722"/>
        <end position="725"/>
    </location>
</feature>
<feature type="strand" evidence="11">
    <location>
        <begin position="727"/>
        <end position="747"/>
    </location>
</feature>
<feature type="strand" evidence="16">
    <location>
        <begin position="749"/>
        <end position="752"/>
    </location>
</feature>
<feature type="turn" evidence="11">
    <location>
        <begin position="754"/>
        <end position="756"/>
    </location>
</feature>
<feature type="strand" evidence="11">
    <location>
        <begin position="759"/>
        <end position="766"/>
    </location>
</feature>
<feature type="strand" evidence="14">
    <location>
        <begin position="776"/>
        <end position="782"/>
    </location>
</feature>
<feature type="strand" evidence="14">
    <location>
        <begin position="785"/>
        <end position="788"/>
    </location>
</feature>
<feature type="strand" evidence="13">
    <location>
        <begin position="789"/>
        <end position="791"/>
    </location>
</feature>
<feature type="strand" evidence="14">
    <location>
        <begin position="792"/>
        <end position="804"/>
    </location>
</feature>
<feature type="strand" evidence="14">
    <location>
        <begin position="808"/>
        <end position="815"/>
    </location>
</feature>
<feature type="turn" evidence="14">
    <location>
        <begin position="818"/>
        <end position="820"/>
    </location>
</feature>
<feature type="strand" evidence="14">
    <location>
        <begin position="821"/>
        <end position="827"/>
    </location>
</feature>
<feature type="strand" evidence="14">
    <location>
        <begin position="832"/>
        <end position="840"/>
    </location>
</feature>
<feature type="strand" evidence="14">
    <location>
        <begin position="843"/>
        <end position="854"/>
    </location>
</feature>
<feature type="strand" evidence="14">
    <location>
        <begin position="858"/>
        <end position="869"/>
    </location>
</feature>
<feature type="strand" evidence="14">
    <location>
        <begin position="873"/>
        <end position="886"/>
    </location>
</feature>
<feature type="strand" evidence="13">
    <location>
        <begin position="888"/>
        <end position="890"/>
    </location>
</feature>
<feature type="strand" evidence="14">
    <location>
        <begin position="892"/>
        <end position="894"/>
    </location>
</feature>
<feature type="strand" evidence="14">
    <location>
        <begin position="898"/>
        <end position="905"/>
    </location>
</feature>
<feature type="strand" evidence="18">
    <location>
        <begin position="918"/>
        <end position="925"/>
    </location>
</feature>
<feature type="strand" evidence="18">
    <location>
        <begin position="930"/>
        <end position="935"/>
    </location>
</feature>
<feature type="strand" evidence="18">
    <location>
        <begin position="943"/>
        <end position="950"/>
    </location>
</feature>
<feature type="strand" evidence="18">
    <location>
        <begin position="953"/>
        <end position="959"/>
    </location>
</feature>
<feature type="strand" evidence="18">
    <location>
        <begin position="964"/>
        <end position="967"/>
    </location>
</feature>
<feature type="strand" evidence="18">
    <location>
        <begin position="975"/>
        <end position="984"/>
    </location>
</feature>
<feature type="strand" evidence="18">
    <location>
        <begin position="993"/>
        <end position="998"/>
    </location>
</feature>
<reference evidence="10" key="1">
    <citation type="journal article" date="2006" name="Genome Res.">
        <title>Skewed genomic variability in strains of the toxigenic bacterial pathogen, Clostridium perfringens.</title>
        <authorList>
            <person name="Myers G.S.A."/>
            <person name="Rasko D.A."/>
            <person name="Cheung J.K."/>
            <person name="Ravel J."/>
            <person name="Seshadri R."/>
            <person name="DeBoy R.T."/>
            <person name="Ren Q."/>
            <person name="Varga J."/>
            <person name="Awad M.M."/>
            <person name="Brinkac L.M."/>
            <person name="Daugherty S.C."/>
            <person name="Haft D.H."/>
            <person name="Dodson R.J."/>
            <person name="Madupu R."/>
            <person name="Nelson W.C."/>
            <person name="Rosovitz M.J."/>
            <person name="Sullivan S.A."/>
            <person name="Khouri H."/>
            <person name="Dimitrov G.I."/>
            <person name="Watkins K.L."/>
            <person name="Mulligan S."/>
            <person name="Benton J."/>
            <person name="Radune D."/>
            <person name="Fisher D.J."/>
            <person name="Atkins H.S."/>
            <person name="Hiscox T."/>
            <person name="Jost B.H."/>
            <person name="Billington S.J."/>
            <person name="Songer J.G."/>
            <person name="McClane B.A."/>
            <person name="Titball R.W."/>
            <person name="Rood J.I."/>
            <person name="Melville S.B."/>
            <person name="Paulsen I.T."/>
        </authorList>
    </citation>
    <scope>NUCLEOTIDE SEQUENCE [LARGE SCALE GENOMIC DNA]</scope>
    <source>
        <strain>ATCC 13124 / DSM 756 / JCM 1290 / NCIMB 6125 / NCTC 8237 / S 107 / Type A</strain>
    </source>
</reference>
<reference evidence="9" key="2">
    <citation type="journal article" date="2006" name="EMBO J.">
        <title>Structural insights into the mechanism and inhibition of eukaryotic O-GlcNAc hydrolysis.</title>
        <authorList>
            <person name="Rao F.V."/>
            <person name="Dorfmueller H.C."/>
            <person name="Villa F."/>
            <person name="Allwood M."/>
            <person name="Eggleston I.M."/>
            <person name="van Aalten D.M."/>
        </authorList>
    </citation>
    <scope>X-RAY CRYSTALLOGRAPHY (2.25 ANGSTROMS) OF 31-624 IN COMPLEX WITH THE SUBSTRATE ANALOG PUGNAC</scope>
    <scope>BIOPHYSICOCHEMICAL PROPERTIES</scope>
    <scope>MUTAGENESIS OF ASP-297; ASP-298; TYR-335; ASN-390; ASN-396; ASP-401 AND TRP-490</scope>
    <scope>FUNCTION</scope>
    <scope>CATALYTIC ACTIVITY</scope>
    <scope>ACTIVE SITE</scope>
    <source>
        <strain>ATCC 13124 / DSM 756 / JCM 1290 / NCIMB 6125 / NCTC 8237 / S 107 / Type A</strain>
    </source>
</reference>
<reference key="3">
    <citation type="journal article" date="2006" name="J. Biol. Chem.">
        <title>The interaction of a carbohydrate-binding module from a Clostridium perfringens N-acetyl-beta-hexosaminidase with its carbohydrate receptor.</title>
        <authorList>
            <person name="Ficko-Blean E."/>
            <person name="Boraston A.B."/>
        </authorList>
    </citation>
    <scope>X-RAY CRYSTALLOGRAPHY (1.49 ANGSTROMS) OF 625-767 IN COMPLEX WITH GALACTOSE AND N-ACETYL-ALPHA-D-GLUCOSAMINE</scope>
    <scope>FUNCTION</scope>
    <source>
        <strain>ATCC 13124 / DSM 756 / JCM 1290 / NCIMB 6125 / NCTC 8237 / S 107 / Type A</strain>
    </source>
</reference>
<reference key="4">
    <citation type="journal article" date="2008" name="Chem. Biol.">
        <title>Chemical dissection of the link between streptozotocin, O-GlcNAc, and pancreatic cell death.</title>
        <authorList>
            <person name="Pathak S."/>
            <person name="Dorfmueller H.C."/>
            <person name="Borodkin V.S."/>
            <person name="van Aalten D.M."/>
        </authorList>
    </citation>
    <scope>X-RAY CRYSTALLOGRAPHY (2.20 ANGSTROMS) OF 31-624 IN COMPLEX WITH THE SUBSTRATE ANALOG STREPTOZOTOCIN</scope>
    <scope>CATALYTIC ACTIVITY</scope>
    <scope>ACTIVITY REGULATION</scope>
    <source>
        <strain>ATCC 13124 / DSM 756 / JCM 1290 / NCIMB 6125 / NCTC 8237 / S 107 / Type A</strain>
    </source>
</reference>
<reference key="5">
    <citation type="journal article" date="2009" name="J. Biol. Chem.">
        <title>Portrait of an enzyme, a complete structural analysis of a multimodular {beta}-N-acetylglucosaminidase from Clostridium perfringens.</title>
        <authorList>
            <person name="Ficko-Blean E."/>
            <person name="Gregg K.J."/>
            <person name="Adams J.J."/>
            <person name="Hehemann J.H."/>
            <person name="Czjzek M."/>
            <person name="Smith S.P."/>
            <person name="Boraston A.B."/>
        </authorList>
    </citation>
    <scope>X-RAY CRYSTALLOGRAPHY (1.80 ANGSTROMS) OF 765-1001</scope>
    <source>
        <strain>ATCC 13124 / DSM 756 / JCM 1290 / NCIMB 6125 / NCTC 8237 / S 107 / Type A</strain>
    </source>
</reference>
<reference key="6">
    <citation type="journal article" date="2012" name="Chem. Biol.">
        <title>Synergy of peptide and sugar in O-GlcNAcase substrate recognition.</title>
        <authorList>
            <person name="Schimpl M."/>
            <person name="Borodkin V.S."/>
            <person name="Gray L.J."/>
            <person name="van Aalten D.M."/>
        </authorList>
    </citation>
    <scope>X-RAY CRYSTALLOGRAPHY (2.55 ANGSTROMS) OF 31-618 OF MUTANT ASN-298 IN COMPLEX WITH N-ACETYL-D-GLUCOSAMINE</scope>
    <scope>CATALYTIC ACTIVITY</scope>
    <scope>MUTAGENESIS OF ASP-298</scope>
    <source>
        <strain>ATCC 13124 / DSM 756 / JCM 1290 / NCIMB 6125 / NCTC 8237 / S 107 / Type A</strain>
    </source>
</reference>
<sequence>MKRKMLKRLLTSAFACMFIANGLITTTVRAVGPKTGEENQVLVPNLNPTPENLEVVGDGFKITSSINLVGEEEADENAVNALREFLTANNIEINSENDPNSTTLIIGEVDDDIPELDEALNGTTAENLKEEGYALVSNDGKIAIEGKDGDGTFYGVQTFKQLVKESNIPEVNITDYPTVSARGIVEGFYGTPWTHQDRLDQIKFYGENKLNTYIYAPKDDPYHREKWREPYPESEMQRMQELINASAENKVDFVFGISPGIDIRFDGDAGEEDFNHLITKAESLYDMGVRSFAIYWDDIQDKSAAKHAQVLNRFNEEFVKAKGDVKPLITVPTEYDTGAMVSNGQPRAYTRIFAETVDPSIEVMWTGPGVVTNEIPLSDAQLISGIYNRNMAVWWNYPVTDYFKGKLALGPMHGLDKGLNQYVDFFTVNPMEHAELSKISIHTAADYSWNMDNYDYDKAWNRAIDMLYGDLAEDMKVFANHSTRMDNKTWAKSGREDAPELRAKMDELWNKLSSKEDASALIEELYGEFARMEEACNNLKANLPEVALEECSRQLDELITLAQGDKASLDMIVAQLNEDTEAYESAKEIAQNKLNTALSSFAVISEKVAQSFIQEALSFDLTLINPRTVKITASSEETSGENAPASFASDGDMNTFWHSKWSSPAHEGPHHLTLELDNVYEINKVKYAPRQDSKNGRITGYKVSVSLDGENFTEVKTGTLEDNAAIKFIEFDSVDAKYVRLDVTDSVSDQANGRGKFATAAEVNVHGKLKENAEVTGSVSLEALEEVQVGENLEVGVGIDELVNAEAFAYDFTLNYDENAFEYVEAISDDGVFVNAKKIEDGKVRVLVSSLTGEPLPAKEVLAKVVLRAEAKAEGSNLSVTNSSVGDGEGLVHEIAGTEKTVNIIEGTSPEIVVNPVRDFKASEINKKNVTVTWTEPETTEGLEGYILYKDGKKVAEIGKDETSYTFKKLNRHTIYNFKIAAKYSNGEVSSKESLTLRTAR</sequence>
<dbReference type="EC" id="3.2.1.169" evidence="4 6 7"/>
<dbReference type="EMBL" id="CP000246">
    <property type="protein sequence ID" value="ABG84519.1"/>
    <property type="molecule type" value="Genomic_DNA"/>
</dbReference>
<dbReference type="RefSeq" id="WP_003456570.1">
    <property type="nucleotide sequence ID" value="NC_008261.1"/>
</dbReference>
<dbReference type="PDB" id="2CBI">
    <property type="method" value="X-ray"/>
    <property type="resolution" value="2.25 A"/>
    <property type="chains" value="A/B=31-624"/>
</dbReference>
<dbReference type="PDB" id="2CBJ">
    <property type="method" value="X-ray"/>
    <property type="resolution" value="2.35 A"/>
    <property type="chains" value="A/B=31-624"/>
</dbReference>
<dbReference type="PDB" id="2J1A">
    <property type="method" value="X-ray"/>
    <property type="resolution" value="1.49 A"/>
    <property type="chains" value="A=625-767"/>
</dbReference>
<dbReference type="PDB" id="2J1E">
    <property type="method" value="X-ray"/>
    <property type="resolution" value="2.40 A"/>
    <property type="chains" value="A=625-767"/>
</dbReference>
<dbReference type="PDB" id="2J62">
    <property type="method" value="X-ray"/>
    <property type="resolution" value="2.26 A"/>
    <property type="chains" value="A/B=31-624"/>
</dbReference>
<dbReference type="PDB" id="2J7M">
    <property type="method" value="X-ray"/>
    <property type="resolution" value="2.30 A"/>
    <property type="chains" value="A=625-767"/>
</dbReference>
<dbReference type="PDB" id="2JH2">
    <property type="method" value="X-ray"/>
    <property type="resolution" value="2.50 A"/>
    <property type="chains" value="A/B/C=768-909"/>
</dbReference>
<dbReference type="PDB" id="2O4E">
    <property type="method" value="NMR"/>
    <property type="chains" value="A=768-909"/>
</dbReference>
<dbReference type="PDB" id="2OZN">
    <property type="method" value="X-ray"/>
    <property type="resolution" value="1.60 A"/>
    <property type="chains" value="A=768-909"/>
</dbReference>
<dbReference type="PDB" id="2V5C">
    <property type="method" value="X-ray"/>
    <property type="resolution" value="2.10 A"/>
    <property type="chains" value="A/B=31-624"/>
</dbReference>
<dbReference type="PDB" id="2V5D">
    <property type="method" value="X-ray"/>
    <property type="resolution" value="3.30 A"/>
    <property type="chains" value="A=31-767"/>
</dbReference>
<dbReference type="PDB" id="2VUR">
    <property type="method" value="X-ray"/>
    <property type="resolution" value="2.20 A"/>
    <property type="chains" value="A/B=31-624"/>
</dbReference>
<dbReference type="PDB" id="2W1N">
    <property type="method" value="X-ray"/>
    <property type="resolution" value="1.80 A"/>
    <property type="chains" value="A=765-1001"/>
</dbReference>
<dbReference type="PDB" id="2WB5">
    <property type="method" value="X-ray"/>
    <property type="resolution" value="2.31 A"/>
    <property type="chains" value="A/B=31-624"/>
</dbReference>
<dbReference type="PDB" id="2X0Y">
    <property type="method" value="X-ray"/>
    <property type="resolution" value="2.25 A"/>
    <property type="chains" value="A/B=31-624"/>
</dbReference>
<dbReference type="PDB" id="2XPK">
    <property type="method" value="X-ray"/>
    <property type="resolution" value="2.40 A"/>
    <property type="chains" value="A/B=31-624"/>
</dbReference>
<dbReference type="PDB" id="2YDQ">
    <property type="method" value="X-ray"/>
    <property type="resolution" value="2.60 A"/>
    <property type="chains" value="A=31-618"/>
</dbReference>
<dbReference type="PDB" id="2YDR">
    <property type="method" value="X-ray"/>
    <property type="resolution" value="2.75 A"/>
    <property type="chains" value="A=31-618"/>
</dbReference>
<dbReference type="PDB" id="2YDS">
    <property type="method" value="X-ray"/>
    <property type="resolution" value="2.55 A"/>
    <property type="chains" value="A=31-618"/>
</dbReference>
<dbReference type="PDB" id="4ZXL">
    <property type="method" value="X-ray"/>
    <property type="resolution" value="2.60 A"/>
    <property type="chains" value="A=39-617"/>
</dbReference>
<dbReference type="PDB" id="5OXD">
    <property type="method" value="X-ray"/>
    <property type="resolution" value="2.60 A"/>
    <property type="chains" value="A=31-618"/>
</dbReference>
<dbReference type="PDB" id="6RHE">
    <property type="method" value="X-ray"/>
    <property type="resolution" value="3.10 A"/>
    <property type="chains" value="A=31-619"/>
</dbReference>
<dbReference type="PDB" id="7KHV">
    <property type="method" value="X-ray"/>
    <property type="resolution" value="2.30 A"/>
    <property type="chains" value="A/B/C/D/E/F=31-624"/>
</dbReference>
<dbReference type="PDBsum" id="2CBI"/>
<dbReference type="PDBsum" id="2CBJ"/>
<dbReference type="PDBsum" id="2J1A"/>
<dbReference type="PDBsum" id="2J1E"/>
<dbReference type="PDBsum" id="2J62"/>
<dbReference type="PDBsum" id="2J7M"/>
<dbReference type="PDBsum" id="2JH2"/>
<dbReference type="PDBsum" id="2O4E"/>
<dbReference type="PDBsum" id="2OZN"/>
<dbReference type="PDBsum" id="2V5C"/>
<dbReference type="PDBsum" id="2V5D"/>
<dbReference type="PDBsum" id="2VUR"/>
<dbReference type="PDBsum" id="2W1N"/>
<dbReference type="PDBsum" id="2WB5"/>
<dbReference type="PDBsum" id="2X0Y"/>
<dbReference type="PDBsum" id="2XPK"/>
<dbReference type="PDBsum" id="2YDQ"/>
<dbReference type="PDBsum" id="2YDR"/>
<dbReference type="PDBsum" id="2YDS"/>
<dbReference type="PDBsum" id="4ZXL"/>
<dbReference type="PDBsum" id="5OXD"/>
<dbReference type="PDBsum" id="6RHE"/>
<dbReference type="PDBsum" id="7KHV"/>
<dbReference type="BMRB" id="Q0TR53"/>
<dbReference type="SMR" id="Q0TR53"/>
<dbReference type="STRING" id="195103.CPF_1442"/>
<dbReference type="CAZy" id="CBM32">
    <property type="family name" value="Carbohydrate-Binding Module Family 32"/>
</dbReference>
<dbReference type="CAZy" id="GH84">
    <property type="family name" value="Glycoside Hydrolase Family 84"/>
</dbReference>
<dbReference type="PaxDb" id="195103-CPF_1442"/>
<dbReference type="DNASU" id="4202790"/>
<dbReference type="KEGG" id="cpf:CPF_1442"/>
<dbReference type="eggNOG" id="COG3291">
    <property type="taxonomic scope" value="Bacteria"/>
</dbReference>
<dbReference type="eggNOG" id="COG3525">
    <property type="taxonomic scope" value="Bacteria"/>
</dbReference>
<dbReference type="HOGENOM" id="CLU_001501_2_0_9"/>
<dbReference type="BRENDA" id="3.2.1.169">
    <property type="organism ID" value="1503"/>
</dbReference>
<dbReference type="SABIO-RK" id="Q0TR53"/>
<dbReference type="EvolutionaryTrace" id="Q0TR53"/>
<dbReference type="Proteomes" id="UP000001823">
    <property type="component" value="Chromosome"/>
</dbReference>
<dbReference type="GO" id="GO:0102571">
    <property type="term" value="F:[protein]-3-O-(N-acetyl-D-glucosaminyl)-L-serine/L-threonine O-N-acetyl-alpha-D-glucosaminase activity"/>
    <property type="evidence" value="ECO:0007669"/>
    <property type="project" value="UniProtKB-EC"/>
</dbReference>
<dbReference type="GO" id="GO:0016231">
    <property type="term" value="F:beta-N-acetylglucosaminidase activity"/>
    <property type="evidence" value="ECO:0000314"/>
    <property type="project" value="UniProtKB"/>
</dbReference>
<dbReference type="GO" id="GO:0030246">
    <property type="term" value="F:carbohydrate binding"/>
    <property type="evidence" value="ECO:0000314"/>
    <property type="project" value="UniProtKB"/>
</dbReference>
<dbReference type="GO" id="GO:0005975">
    <property type="term" value="P:carbohydrate metabolic process"/>
    <property type="evidence" value="ECO:0000314"/>
    <property type="project" value="UniProtKB"/>
</dbReference>
<dbReference type="GO" id="GO:0000272">
    <property type="term" value="P:polysaccharide catabolic process"/>
    <property type="evidence" value="ECO:0007669"/>
    <property type="project" value="InterPro"/>
</dbReference>
<dbReference type="GO" id="GO:0006517">
    <property type="term" value="P:protein deglycosylation"/>
    <property type="evidence" value="ECO:0000315"/>
    <property type="project" value="UniProtKB"/>
</dbReference>
<dbReference type="CDD" id="cd08546">
    <property type="entry name" value="cohesin_like"/>
    <property type="match status" value="1"/>
</dbReference>
<dbReference type="CDD" id="cd00063">
    <property type="entry name" value="FN3"/>
    <property type="match status" value="1"/>
</dbReference>
<dbReference type="FunFam" id="3.20.20.80:FF:000009">
    <property type="entry name" value="O-GlcNAcase BT_4395"/>
    <property type="match status" value="1"/>
</dbReference>
<dbReference type="Gene3D" id="2.60.40.680">
    <property type="match status" value="1"/>
</dbReference>
<dbReference type="Gene3D" id="3.30.379.10">
    <property type="entry name" value="Chitobiase/beta-hexosaminidase domain 2-like"/>
    <property type="match status" value="1"/>
</dbReference>
<dbReference type="Gene3D" id="2.60.120.260">
    <property type="entry name" value="Galactose-binding domain-like"/>
    <property type="match status" value="1"/>
</dbReference>
<dbReference type="Gene3D" id="3.20.20.80">
    <property type="entry name" value="Glycosidases"/>
    <property type="match status" value="1"/>
</dbReference>
<dbReference type="Gene3D" id="1.20.58.460">
    <property type="entry name" value="Hyaluronidase post-catalytic domain-like"/>
    <property type="match status" value="1"/>
</dbReference>
<dbReference type="Gene3D" id="2.60.40.10">
    <property type="entry name" value="Immunoglobulins"/>
    <property type="match status" value="1"/>
</dbReference>
<dbReference type="InterPro" id="IPR008965">
    <property type="entry name" value="CBM2/CBM3_carb-bd_dom_sf"/>
</dbReference>
<dbReference type="InterPro" id="IPR002102">
    <property type="entry name" value="Cohesin_dom"/>
</dbReference>
<dbReference type="InterPro" id="IPR000421">
    <property type="entry name" value="FA58C"/>
</dbReference>
<dbReference type="InterPro" id="IPR003961">
    <property type="entry name" value="FN3_dom"/>
</dbReference>
<dbReference type="InterPro" id="IPR036116">
    <property type="entry name" value="FN3_sf"/>
</dbReference>
<dbReference type="InterPro" id="IPR008979">
    <property type="entry name" value="Galactose-bd-like_sf"/>
</dbReference>
<dbReference type="InterPro" id="IPR017853">
    <property type="entry name" value="Glycoside_hydrolase_SF"/>
</dbReference>
<dbReference type="InterPro" id="IPR051822">
    <property type="entry name" value="Glycosyl_Hydrolase_84"/>
</dbReference>
<dbReference type="InterPro" id="IPR029018">
    <property type="entry name" value="Hex-like_dom2"/>
</dbReference>
<dbReference type="InterPro" id="IPR015882">
    <property type="entry name" value="HEX_bac_N"/>
</dbReference>
<dbReference type="InterPro" id="IPR013783">
    <property type="entry name" value="Ig-like_fold"/>
</dbReference>
<dbReference type="InterPro" id="IPR049019">
    <property type="entry name" value="NagJ-like_helical"/>
</dbReference>
<dbReference type="InterPro" id="IPR011496">
    <property type="entry name" value="O-GlcNAcase_cat"/>
</dbReference>
<dbReference type="PANTHER" id="PTHR13170">
    <property type="entry name" value="O-GLCNACASE"/>
    <property type="match status" value="1"/>
</dbReference>
<dbReference type="PANTHER" id="PTHR13170:SF16">
    <property type="entry name" value="PROTEIN O-GLCNACASE"/>
    <property type="match status" value="1"/>
</dbReference>
<dbReference type="Pfam" id="PF00963">
    <property type="entry name" value="Cohesin"/>
    <property type="match status" value="1"/>
</dbReference>
<dbReference type="Pfam" id="PF00754">
    <property type="entry name" value="F5_F8_type_C"/>
    <property type="match status" value="1"/>
</dbReference>
<dbReference type="Pfam" id="PF00041">
    <property type="entry name" value="fn3"/>
    <property type="match status" value="1"/>
</dbReference>
<dbReference type="Pfam" id="PF02838">
    <property type="entry name" value="Glyco_hydro_20b"/>
    <property type="match status" value="1"/>
</dbReference>
<dbReference type="Pfam" id="PF07555">
    <property type="entry name" value="NAGidase"/>
    <property type="match status" value="1"/>
</dbReference>
<dbReference type="Pfam" id="PF21774">
    <property type="entry name" value="NagJ_C"/>
    <property type="match status" value="1"/>
</dbReference>
<dbReference type="SMART" id="SM00060">
    <property type="entry name" value="FN3"/>
    <property type="match status" value="1"/>
</dbReference>
<dbReference type="SUPFAM" id="SSF51445">
    <property type="entry name" value="(Trans)glycosidases"/>
    <property type="match status" value="1"/>
</dbReference>
<dbReference type="SUPFAM" id="SSF55545">
    <property type="entry name" value="beta-N-acetylhexosaminidase-like domain"/>
    <property type="match status" value="1"/>
</dbReference>
<dbReference type="SUPFAM" id="SSF49384">
    <property type="entry name" value="Carbohydrate-binding domain"/>
    <property type="match status" value="1"/>
</dbReference>
<dbReference type="SUPFAM" id="SSF49265">
    <property type="entry name" value="Fibronectin type III"/>
    <property type="match status" value="1"/>
</dbReference>
<dbReference type="SUPFAM" id="SSF49785">
    <property type="entry name" value="Galactose-binding domain-like"/>
    <property type="match status" value="1"/>
</dbReference>
<dbReference type="SUPFAM" id="SSF140657">
    <property type="entry name" value="Hyaluronidase post-catalytic domain-like"/>
    <property type="match status" value="1"/>
</dbReference>
<dbReference type="PROSITE" id="PS50853">
    <property type="entry name" value="FN3"/>
    <property type="match status" value="1"/>
</dbReference>
<dbReference type="PROSITE" id="PS52009">
    <property type="entry name" value="GH84"/>
    <property type="match status" value="1"/>
</dbReference>
<name>OGA_CLOP1</name>
<gene>
    <name type="primary">nagJ</name>
    <name type="ordered locus">CPF_1442</name>
</gene>
<evidence type="ECO:0000255" key="1"/>
<evidence type="ECO:0000255" key="2">
    <source>
        <dbReference type="PROSITE-ProRule" id="PRU00316"/>
    </source>
</evidence>
<evidence type="ECO:0000255" key="3">
    <source>
        <dbReference type="PROSITE-ProRule" id="PRU01353"/>
    </source>
</evidence>
<evidence type="ECO:0000269" key="4">
    <source>
    </source>
</evidence>
<evidence type="ECO:0000269" key="5">
    <source>
    </source>
</evidence>
<evidence type="ECO:0000269" key="6">
    <source>
    </source>
</evidence>
<evidence type="ECO:0000269" key="7">
    <source>
    </source>
</evidence>
<evidence type="ECO:0000303" key="8">
    <source>
    </source>
</evidence>
<evidence type="ECO:0000305" key="9"/>
<evidence type="ECO:0000312" key="10">
    <source>
        <dbReference type="EMBL" id="ABG84519.1"/>
    </source>
</evidence>
<evidence type="ECO:0007829" key="11">
    <source>
        <dbReference type="PDB" id="2J1A"/>
    </source>
</evidence>
<evidence type="ECO:0007829" key="12">
    <source>
        <dbReference type="PDB" id="2J62"/>
    </source>
</evidence>
<evidence type="ECO:0007829" key="13">
    <source>
        <dbReference type="PDB" id="2O4E"/>
    </source>
</evidence>
<evidence type="ECO:0007829" key="14">
    <source>
        <dbReference type="PDB" id="2OZN"/>
    </source>
</evidence>
<evidence type="ECO:0007829" key="15">
    <source>
        <dbReference type="PDB" id="2V5C"/>
    </source>
</evidence>
<evidence type="ECO:0007829" key="16">
    <source>
        <dbReference type="PDB" id="2V5D"/>
    </source>
</evidence>
<evidence type="ECO:0007829" key="17">
    <source>
        <dbReference type="PDB" id="2VUR"/>
    </source>
</evidence>
<evidence type="ECO:0007829" key="18">
    <source>
        <dbReference type="PDB" id="2W1N"/>
    </source>
</evidence>
<evidence type="ECO:0007829" key="19">
    <source>
        <dbReference type="PDB" id="2WB5"/>
    </source>
</evidence>
<evidence type="ECO:0007829" key="20">
    <source>
        <dbReference type="PDB" id="2X0Y"/>
    </source>
</evidence>
<organism>
    <name type="scientific">Clostridium perfringens (strain ATCC 13124 / DSM 756 / JCM 1290 / NCIMB 6125 / NCTC 8237 / Type A)</name>
    <dbReference type="NCBI Taxonomy" id="195103"/>
    <lineage>
        <taxon>Bacteria</taxon>
        <taxon>Bacillati</taxon>
        <taxon>Bacillota</taxon>
        <taxon>Clostridia</taxon>
        <taxon>Eubacteriales</taxon>
        <taxon>Clostridiaceae</taxon>
        <taxon>Clostridium</taxon>
    </lineage>
</organism>
<keyword id="KW-0002">3D-structure</keyword>
<keyword id="KW-0175">Coiled coil</keyword>
<keyword id="KW-0326">Glycosidase</keyword>
<keyword id="KW-0378">Hydrolase</keyword>
<keyword id="KW-0732">Signal</keyword>
<accession>Q0TR53</accession>